<gene>
    <name evidence="1" type="primary">trpS</name>
    <name type="ordered locus">HI_0637</name>
</gene>
<organism>
    <name type="scientific">Haemophilus influenzae (strain ATCC 51907 / DSM 11121 / KW20 / Rd)</name>
    <dbReference type="NCBI Taxonomy" id="71421"/>
    <lineage>
        <taxon>Bacteria</taxon>
        <taxon>Pseudomonadati</taxon>
        <taxon>Pseudomonadota</taxon>
        <taxon>Gammaproteobacteria</taxon>
        <taxon>Pasteurellales</taxon>
        <taxon>Pasteurellaceae</taxon>
        <taxon>Haemophilus</taxon>
    </lineage>
</organism>
<comment type="function">
    <text evidence="1">Catalyzes the attachment of tryptophan to tRNA(Trp).</text>
</comment>
<comment type="catalytic activity">
    <reaction evidence="1">
        <text>tRNA(Trp) + L-tryptophan + ATP = L-tryptophyl-tRNA(Trp) + AMP + diphosphate + H(+)</text>
        <dbReference type="Rhea" id="RHEA:24080"/>
        <dbReference type="Rhea" id="RHEA-COMP:9671"/>
        <dbReference type="Rhea" id="RHEA-COMP:9705"/>
        <dbReference type="ChEBI" id="CHEBI:15378"/>
        <dbReference type="ChEBI" id="CHEBI:30616"/>
        <dbReference type="ChEBI" id="CHEBI:33019"/>
        <dbReference type="ChEBI" id="CHEBI:57912"/>
        <dbReference type="ChEBI" id="CHEBI:78442"/>
        <dbReference type="ChEBI" id="CHEBI:78535"/>
        <dbReference type="ChEBI" id="CHEBI:456215"/>
        <dbReference type="EC" id="6.1.1.2"/>
    </reaction>
</comment>
<comment type="subunit">
    <text evidence="1">Homodimer.</text>
</comment>
<comment type="subcellular location">
    <subcellularLocation>
        <location evidence="1">Cytoplasm</location>
    </subcellularLocation>
</comment>
<comment type="similarity">
    <text evidence="1">Belongs to the class-I aminoacyl-tRNA synthetase family.</text>
</comment>
<reference key="1">
    <citation type="journal article" date="1995" name="Science">
        <title>Whole-genome random sequencing and assembly of Haemophilus influenzae Rd.</title>
        <authorList>
            <person name="Fleischmann R.D."/>
            <person name="Adams M.D."/>
            <person name="White O."/>
            <person name="Clayton R.A."/>
            <person name="Kirkness E.F."/>
            <person name="Kerlavage A.R."/>
            <person name="Bult C.J."/>
            <person name="Tomb J.-F."/>
            <person name="Dougherty B.A."/>
            <person name="Merrick J.M."/>
            <person name="McKenney K."/>
            <person name="Sutton G.G."/>
            <person name="FitzHugh W."/>
            <person name="Fields C.A."/>
            <person name="Gocayne J.D."/>
            <person name="Scott J.D."/>
            <person name="Shirley R."/>
            <person name="Liu L.-I."/>
            <person name="Glodek A."/>
            <person name="Kelley J.M."/>
            <person name="Weidman J.F."/>
            <person name="Phillips C.A."/>
            <person name="Spriggs T."/>
            <person name="Hedblom E."/>
            <person name="Cotton M.D."/>
            <person name="Utterback T.R."/>
            <person name="Hanna M.C."/>
            <person name="Nguyen D.T."/>
            <person name="Saudek D.M."/>
            <person name="Brandon R.C."/>
            <person name="Fine L.D."/>
            <person name="Fritchman J.L."/>
            <person name="Fuhrmann J.L."/>
            <person name="Geoghagen N.S.M."/>
            <person name="Gnehm C.L."/>
            <person name="McDonald L.A."/>
            <person name="Small K.V."/>
            <person name="Fraser C.M."/>
            <person name="Smith H.O."/>
            <person name="Venter J.C."/>
        </authorList>
    </citation>
    <scope>NUCLEOTIDE SEQUENCE [LARGE SCALE GENOMIC DNA]</scope>
    <source>
        <strain>ATCC 51907 / DSM 11121 / KW20 / Rd</strain>
    </source>
</reference>
<keyword id="KW-0002">3D-structure</keyword>
<keyword id="KW-0030">Aminoacyl-tRNA synthetase</keyword>
<keyword id="KW-0067">ATP-binding</keyword>
<keyword id="KW-0963">Cytoplasm</keyword>
<keyword id="KW-0436">Ligase</keyword>
<keyword id="KW-0547">Nucleotide-binding</keyword>
<keyword id="KW-0648">Protein biosynthesis</keyword>
<keyword id="KW-1185">Reference proteome</keyword>
<sequence>MAKPIVFSGVQPSGELTIGNYLGALRNWVKMQEDYECIFCVVDLHAITVRQDPVALRKATLDVLALYLACGIDPNKSTIFVQSHVPEHTQLSWVLNCYTYFGEMSRMTQFKDKSARYAENINVGLFDYPVLMAADILLYQAKSVPVGDDQKQHLEITRDIANRFNALYGNIFTIPEIFIGKAGARIMSLQDPEKKMSKSDDNRNNVVTLLEDPKSVAKKIKRAVTDSDEPPVVRYDVQNKAGVSNLLDILSAVTDKPIADLEKEFEGKMYGHLKTAVADEVSTLLASLQERFHQYRNDETLLDNILRQGAEKARAKAQETLAKVYEAVGFVAAK</sequence>
<feature type="chain" id="PRO_0000136635" description="Tryptophan--tRNA ligase">
    <location>
        <begin position="1"/>
        <end position="334"/>
    </location>
</feature>
<feature type="short sequence motif" description="'HIGH' region" evidence="1">
    <location>
        <begin position="12"/>
        <end position="20"/>
    </location>
</feature>
<feature type="short sequence motif" description="'KMSKS' region" evidence="1">
    <location>
        <begin position="195"/>
        <end position="199"/>
    </location>
</feature>
<feature type="binding site" evidence="1">
    <location>
        <begin position="11"/>
        <end position="13"/>
    </location>
    <ligand>
        <name>ATP</name>
        <dbReference type="ChEBI" id="CHEBI:30616"/>
    </ligand>
</feature>
<feature type="binding site" evidence="1">
    <location>
        <begin position="19"/>
        <end position="20"/>
    </location>
    <ligand>
        <name>ATP</name>
        <dbReference type="ChEBI" id="CHEBI:30616"/>
    </ligand>
</feature>
<feature type="binding site" evidence="1">
    <location>
        <position position="135"/>
    </location>
    <ligand>
        <name>L-tryptophan</name>
        <dbReference type="ChEBI" id="CHEBI:57912"/>
    </ligand>
</feature>
<feature type="binding site" evidence="1">
    <location>
        <begin position="147"/>
        <end position="149"/>
    </location>
    <ligand>
        <name>ATP</name>
        <dbReference type="ChEBI" id="CHEBI:30616"/>
    </ligand>
</feature>
<feature type="binding site" evidence="1">
    <location>
        <position position="186"/>
    </location>
    <ligand>
        <name>ATP</name>
        <dbReference type="ChEBI" id="CHEBI:30616"/>
    </ligand>
</feature>
<feature type="binding site" evidence="1">
    <location>
        <begin position="195"/>
        <end position="199"/>
    </location>
    <ligand>
        <name>ATP</name>
        <dbReference type="ChEBI" id="CHEBI:30616"/>
    </ligand>
</feature>
<feature type="strand" evidence="2">
    <location>
        <begin position="5"/>
        <end position="10"/>
    </location>
</feature>
<feature type="helix" evidence="2">
    <location>
        <begin position="18"/>
        <end position="22"/>
    </location>
</feature>
<feature type="helix" evidence="2">
    <location>
        <begin position="24"/>
        <end position="31"/>
    </location>
</feature>
<feature type="turn" evidence="2">
    <location>
        <begin position="32"/>
        <end position="34"/>
    </location>
</feature>
<feature type="strand" evidence="2">
    <location>
        <begin position="35"/>
        <end position="41"/>
    </location>
</feature>
<feature type="helix" evidence="2">
    <location>
        <begin position="43"/>
        <end position="46"/>
    </location>
</feature>
<feature type="helix" evidence="2">
    <location>
        <begin position="53"/>
        <end position="69"/>
    </location>
</feature>
<feature type="turn" evidence="2">
    <location>
        <begin position="74"/>
        <end position="76"/>
    </location>
</feature>
<feature type="strand" evidence="2">
    <location>
        <begin position="77"/>
        <end position="81"/>
    </location>
</feature>
<feature type="helix" evidence="2">
    <location>
        <begin position="82"/>
        <end position="84"/>
    </location>
</feature>
<feature type="helix" evidence="2">
    <location>
        <begin position="87"/>
        <end position="97"/>
    </location>
</feature>
<feature type="strand" evidence="2">
    <location>
        <begin position="98"/>
        <end position="100"/>
    </location>
</feature>
<feature type="helix" evidence="2">
    <location>
        <begin position="101"/>
        <end position="105"/>
    </location>
</feature>
<feature type="helix" evidence="2">
    <location>
        <begin position="108"/>
        <end position="116"/>
    </location>
</feature>
<feature type="helix" evidence="2">
    <location>
        <begin position="118"/>
        <end position="120"/>
    </location>
</feature>
<feature type="helix" evidence="2">
    <location>
        <begin position="123"/>
        <end position="137"/>
    </location>
</feature>
<feature type="turn" evidence="2">
    <location>
        <begin position="138"/>
        <end position="140"/>
    </location>
</feature>
<feature type="strand" evidence="2">
    <location>
        <begin position="142"/>
        <end position="144"/>
    </location>
</feature>
<feature type="helix" evidence="2">
    <location>
        <begin position="148"/>
        <end position="150"/>
    </location>
</feature>
<feature type="helix" evidence="2">
    <location>
        <begin position="151"/>
        <end position="168"/>
    </location>
</feature>
<feature type="helix" evidence="2">
    <location>
        <begin position="203"/>
        <end position="205"/>
    </location>
</feature>
<feature type="helix" evidence="2">
    <location>
        <begin position="213"/>
        <end position="221"/>
    </location>
</feature>
<feature type="turn" evidence="2">
    <location>
        <begin position="237"/>
        <end position="239"/>
    </location>
</feature>
<feature type="helix" evidence="2">
    <location>
        <begin position="241"/>
        <end position="254"/>
    </location>
</feature>
<feature type="helix" evidence="2">
    <location>
        <begin position="258"/>
        <end position="264"/>
    </location>
</feature>
<feature type="turn" evidence="2">
    <location>
        <begin position="265"/>
        <end position="267"/>
    </location>
</feature>
<feature type="helix" evidence="2">
    <location>
        <begin position="270"/>
        <end position="297"/>
    </location>
</feature>
<feature type="helix" evidence="2">
    <location>
        <begin position="299"/>
        <end position="328"/>
    </location>
</feature>
<dbReference type="EC" id="6.1.1.2" evidence="1"/>
<dbReference type="EMBL" id="L42023">
    <property type="protein sequence ID" value="AAC22296.1"/>
    <property type="molecule type" value="Genomic_DNA"/>
</dbReference>
<dbReference type="PIR" id="C64083">
    <property type="entry name" value="C64083"/>
</dbReference>
<dbReference type="RefSeq" id="NP_438797.1">
    <property type="nucleotide sequence ID" value="NC_000907.1"/>
</dbReference>
<dbReference type="PDB" id="6DFU">
    <property type="method" value="X-ray"/>
    <property type="resolution" value="2.05 A"/>
    <property type="chains" value="A/B=1-334"/>
</dbReference>
<dbReference type="PDBsum" id="6DFU"/>
<dbReference type="SMR" id="P43835"/>
<dbReference type="STRING" id="71421.HI_0637"/>
<dbReference type="EnsemblBacteria" id="AAC22296">
    <property type="protein sequence ID" value="AAC22296"/>
    <property type="gene ID" value="HI_0637"/>
</dbReference>
<dbReference type="KEGG" id="hin:HI_0637"/>
<dbReference type="PATRIC" id="fig|71421.8.peg.665"/>
<dbReference type="eggNOG" id="COG0180">
    <property type="taxonomic scope" value="Bacteria"/>
</dbReference>
<dbReference type="HOGENOM" id="CLU_029244_1_1_6"/>
<dbReference type="OrthoDB" id="9801042at2"/>
<dbReference type="PhylomeDB" id="P43835"/>
<dbReference type="BioCyc" id="HINF71421:G1GJ1-668-MONOMER"/>
<dbReference type="Proteomes" id="UP000000579">
    <property type="component" value="Chromosome"/>
</dbReference>
<dbReference type="GO" id="GO:0005829">
    <property type="term" value="C:cytosol"/>
    <property type="evidence" value="ECO:0000318"/>
    <property type="project" value="GO_Central"/>
</dbReference>
<dbReference type="GO" id="GO:0005524">
    <property type="term" value="F:ATP binding"/>
    <property type="evidence" value="ECO:0007669"/>
    <property type="project" value="UniProtKB-UniRule"/>
</dbReference>
<dbReference type="GO" id="GO:0004830">
    <property type="term" value="F:tryptophan-tRNA ligase activity"/>
    <property type="evidence" value="ECO:0000318"/>
    <property type="project" value="GO_Central"/>
</dbReference>
<dbReference type="GO" id="GO:0006436">
    <property type="term" value="P:tryptophanyl-tRNA aminoacylation"/>
    <property type="evidence" value="ECO:0000318"/>
    <property type="project" value="GO_Central"/>
</dbReference>
<dbReference type="CDD" id="cd00806">
    <property type="entry name" value="TrpRS_core"/>
    <property type="match status" value="1"/>
</dbReference>
<dbReference type="FunFam" id="1.10.240.10:FF:000002">
    <property type="entry name" value="Tryptophan--tRNA ligase"/>
    <property type="match status" value="1"/>
</dbReference>
<dbReference type="FunFam" id="3.40.50.620:FF:000024">
    <property type="entry name" value="Tryptophan--tRNA ligase"/>
    <property type="match status" value="1"/>
</dbReference>
<dbReference type="Gene3D" id="3.40.50.620">
    <property type="entry name" value="HUPs"/>
    <property type="match status" value="1"/>
</dbReference>
<dbReference type="Gene3D" id="1.10.240.10">
    <property type="entry name" value="Tyrosyl-Transfer RNA Synthetase"/>
    <property type="match status" value="1"/>
</dbReference>
<dbReference type="HAMAP" id="MF_00140_B">
    <property type="entry name" value="Trp_tRNA_synth_B"/>
    <property type="match status" value="1"/>
</dbReference>
<dbReference type="InterPro" id="IPR001412">
    <property type="entry name" value="aa-tRNA-synth_I_CS"/>
</dbReference>
<dbReference type="InterPro" id="IPR002305">
    <property type="entry name" value="aa-tRNA-synth_Ic"/>
</dbReference>
<dbReference type="InterPro" id="IPR014729">
    <property type="entry name" value="Rossmann-like_a/b/a_fold"/>
</dbReference>
<dbReference type="InterPro" id="IPR002306">
    <property type="entry name" value="Trp-tRNA-ligase"/>
</dbReference>
<dbReference type="InterPro" id="IPR024109">
    <property type="entry name" value="Trp-tRNA-ligase_bac-type"/>
</dbReference>
<dbReference type="InterPro" id="IPR050203">
    <property type="entry name" value="Trp-tRNA_synthetase"/>
</dbReference>
<dbReference type="NCBIfam" id="TIGR00233">
    <property type="entry name" value="trpS"/>
    <property type="match status" value="1"/>
</dbReference>
<dbReference type="PANTHER" id="PTHR43766">
    <property type="entry name" value="TRYPTOPHAN--TRNA LIGASE, MITOCHONDRIAL"/>
    <property type="match status" value="1"/>
</dbReference>
<dbReference type="PANTHER" id="PTHR43766:SF1">
    <property type="entry name" value="TRYPTOPHAN--TRNA LIGASE, MITOCHONDRIAL"/>
    <property type="match status" value="1"/>
</dbReference>
<dbReference type="Pfam" id="PF00579">
    <property type="entry name" value="tRNA-synt_1b"/>
    <property type="match status" value="1"/>
</dbReference>
<dbReference type="PRINTS" id="PR01039">
    <property type="entry name" value="TRNASYNTHTRP"/>
</dbReference>
<dbReference type="SUPFAM" id="SSF52374">
    <property type="entry name" value="Nucleotidylyl transferase"/>
    <property type="match status" value="1"/>
</dbReference>
<dbReference type="PROSITE" id="PS00178">
    <property type="entry name" value="AA_TRNA_LIGASE_I"/>
    <property type="match status" value="1"/>
</dbReference>
<proteinExistence type="evidence at protein level"/>
<evidence type="ECO:0000255" key="1">
    <source>
        <dbReference type="HAMAP-Rule" id="MF_00140"/>
    </source>
</evidence>
<evidence type="ECO:0007829" key="2">
    <source>
        <dbReference type="PDB" id="6DFU"/>
    </source>
</evidence>
<name>SYW_HAEIN</name>
<protein>
    <recommendedName>
        <fullName evidence="1">Tryptophan--tRNA ligase</fullName>
        <ecNumber evidence="1">6.1.1.2</ecNumber>
    </recommendedName>
    <alternativeName>
        <fullName evidence="1">Tryptophanyl-tRNA synthetase</fullName>
        <shortName evidence="1">TrpRS</shortName>
    </alternativeName>
</protein>
<accession>P43835</accession>